<feature type="chain" id="PRO_0000266987" description="Probable GTP-binding protein EngB">
    <location>
        <begin position="1"/>
        <end position="206"/>
    </location>
</feature>
<feature type="domain" description="EngB-type G" evidence="1">
    <location>
        <begin position="7"/>
        <end position="195"/>
    </location>
</feature>
<feature type="binding site" evidence="1">
    <location>
        <begin position="15"/>
        <end position="22"/>
    </location>
    <ligand>
        <name>GTP</name>
        <dbReference type="ChEBI" id="CHEBI:37565"/>
    </ligand>
</feature>
<feature type="binding site" evidence="1">
    <location>
        <position position="22"/>
    </location>
    <ligand>
        <name>Mg(2+)</name>
        <dbReference type="ChEBI" id="CHEBI:18420"/>
    </ligand>
</feature>
<feature type="binding site" evidence="1">
    <location>
        <begin position="41"/>
        <end position="45"/>
    </location>
    <ligand>
        <name>GTP</name>
        <dbReference type="ChEBI" id="CHEBI:37565"/>
    </ligand>
</feature>
<feature type="binding site" evidence="1">
    <location>
        <position position="43"/>
    </location>
    <ligand>
        <name>Mg(2+)</name>
        <dbReference type="ChEBI" id="CHEBI:18420"/>
    </ligand>
</feature>
<feature type="binding site" evidence="1">
    <location>
        <begin position="60"/>
        <end position="63"/>
    </location>
    <ligand>
        <name>GTP</name>
        <dbReference type="ChEBI" id="CHEBI:37565"/>
    </ligand>
</feature>
<feature type="binding site" evidence="1">
    <location>
        <begin position="140"/>
        <end position="143"/>
    </location>
    <ligand>
        <name>GTP</name>
        <dbReference type="ChEBI" id="CHEBI:37565"/>
    </ligand>
</feature>
<feature type="binding site" evidence="1">
    <location>
        <begin position="175"/>
        <end position="177"/>
    </location>
    <ligand>
        <name>GTP</name>
        <dbReference type="ChEBI" id="CHEBI:37565"/>
    </ligand>
</feature>
<dbReference type="EMBL" id="AM180088">
    <property type="protein sequence ID" value="CAJ53250.1"/>
    <property type="molecule type" value="Genomic_DNA"/>
</dbReference>
<dbReference type="RefSeq" id="WP_011572356.1">
    <property type="nucleotide sequence ID" value="NC_008212.1"/>
</dbReference>
<dbReference type="SMR" id="Q18FK7"/>
<dbReference type="STRING" id="362976.HQ_3150A"/>
<dbReference type="GeneID" id="4193957"/>
<dbReference type="KEGG" id="hwa:HQ_3150A"/>
<dbReference type="eggNOG" id="arCOG00355">
    <property type="taxonomic scope" value="Archaea"/>
</dbReference>
<dbReference type="HOGENOM" id="CLU_033732_3_0_2"/>
<dbReference type="Proteomes" id="UP000001975">
    <property type="component" value="Chromosome"/>
</dbReference>
<dbReference type="GO" id="GO:0005525">
    <property type="term" value="F:GTP binding"/>
    <property type="evidence" value="ECO:0007669"/>
    <property type="project" value="UniProtKB-UniRule"/>
</dbReference>
<dbReference type="GO" id="GO:0046872">
    <property type="term" value="F:metal ion binding"/>
    <property type="evidence" value="ECO:0007669"/>
    <property type="project" value="UniProtKB-KW"/>
</dbReference>
<dbReference type="GO" id="GO:0051301">
    <property type="term" value="P:cell division"/>
    <property type="evidence" value="ECO:0007669"/>
    <property type="project" value="UniProtKB-KW"/>
</dbReference>
<dbReference type="CDD" id="cd01876">
    <property type="entry name" value="YihA_EngB"/>
    <property type="match status" value="1"/>
</dbReference>
<dbReference type="Gene3D" id="3.40.50.300">
    <property type="entry name" value="P-loop containing nucleotide triphosphate hydrolases"/>
    <property type="match status" value="1"/>
</dbReference>
<dbReference type="HAMAP" id="MF_00321">
    <property type="entry name" value="GTPase_EngB"/>
    <property type="match status" value="1"/>
</dbReference>
<dbReference type="InterPro" id="IPR030393">
    <property type="entry name" value="G_ENGB_dom"/>
</dbReference>
<dbReference type="InterPro" id="IPR006073">
    <property type="entry name" value="GTP-bd"/>
</dbReference>
<dbReference type="InterPro" id="IPR019987">
    <property type="entry name" value="GTP-bd_ribosome_bio_YsxC"/>
</dbReference>
<dbReference type="InterPro" id="IPR027417">
    <property type="entry name" value="P-loop_NTPase"/>
</dbReference>
<dbReference type="NCBIfam" id="NF003255">
    <property type="entry name" value="PRK04213.1"/>
    <property type="match status" value="1"/>
</dbReference>
<dbReference type="PANTHER" id="PTHR11649:SF13">
    <property type="entry name" value="ENGB-TYPE G DOMAIN-CONTAINING PROTEIN"/>
    <property type="match status" value="1"/>
</dbReference>
<dbReference type="PANTHER" id="PTHR11649">
    <property type="entry name" value="MSS1/TRME-RELATED GTP-BINDING PROTEIN"/>
    <property type="match status" value="1"/>
</dbReference>
<dbReference type="Pfam" id="PF01926">
    <property type="entry name" value="MMR_HSR1"/>
    <property type="match status" value="1"/>
</dbReference>
<dbReference type="SUPFAM" id="SSF52540">
    <property type="entry name" value="P-loop containing nucleoside triphosphate hydrolases"/>
    <property type="match status" value="1"/>
</dbReference>
<dbReference type="PROSITE" id="PS51706">
    <property type="entry name" value="G_ENGB"/>
    <property type="match status" value="1"/>
</dbReference>
<protein>
    <recommendedName>
        <fullName evidence="1">Probable GTP-binding protein EngB</fullName>
    </recommendedName>
</protein>
<gene>
    <name evidence="1" type="primary">engB</name>
    <name type="ordered locus">HQ_3150A</name>
</gene>
<accession>Q18FK7</accession>
<comment type="function">
    <text evidence="1">Necessary for normal cell division and for the maintenance of normal septation.</text>
</comment>
<comment type="cofactor">
    <cofactor evidence="1">
        <name>Mg(2+)</name>
        <dbReference type="ChEBI" id="CHEBI:18420"/>
    </cofactor>
</comment>
<comment type="similarity">
    <text evidence="1">Belongs to the TRAFAC class TrmE-Era-EngA-EngB-Septin-like GTPase superfamily. EngB GTPase family.</text>
</comment>
<keyword id="KW-0131">Cell cycle</keyword>
<keyword id="KW-0132">Cell division</keyword>
<keyword id="KW-0342">GTP-binding</keyword>
<keyword id="KW-0460">Magnesium</keyword>
<keyword id="KW-0479">Metal-binding</keyword>
<keyword id="KW-0547">Nucleotide-binding</keyword>
<keyword id="KW-1185">Reference proteome</keyword>
<keyword id="KW-0717">Septation</keyword>
<evidence type="ECO:0000255" key="1">
    <source>
        <dbReference type="HAMAP-Rule" id="MF_00321"/>
    </source>
</evidence>
<proteinExistence type="inferred from homology"/>
<sequence length="206" mass="23169">MSETRPDCDEVVLLGRSNVGKSTLMRELTGHTGFTTGRKPGVTRSPNHYDWASESFMFTDLPGFGFMSGVESSQREQIKTDIVRYIESNAESILAAVLVVDGKSAVEIIDRHSGPDEIPHDIELFSFLWELDLPTVVAVNKIDKVENKDNQLDDLCDRLGLYPPWQQWQDTIAPISAKRGSIEPLEEALQAIFSDQRRDDLLKFVT</sequence>
<organism>
    <name type="scientific">Haloquadratum walsbyi (strain DSM 16790 / HBSQ001)</name>
    <dbReference type="NCBI Taxonomy" id="362976"/>
    <lineage>
        <taxon>Archaea</taxon>
        <taxon>Methanobacteriati</taxon>
        <taxon>Methanobacteriota</taxon>
        <taxon>Stenosarchaea group</taxon>
        <taxon>Halobacteria</taxon>
        <taxon>Halobacteriales</taxon>
        <taxon>Haloferacaceae</taxon>
        <taxon>Haloquadratum</taxon>
    </lineage>
</organism>
<reference key="1">
    <citation type="journal article" date="2006" name="BMC Genomics">
        <title>The genome of the square archaeon Haloquadratum walsbyi: life at the limits of water activity.</title>
        <authorList>
            <person name="Bolhuis H."/>
            <person name="Palm P."/>
            <person name="Wende A."/>
            <person name="Falb M."/>
            <person name="Rampp M."/>
            <person name="Rodriguez-Valera F."/>
            <person name="Pfeiffer F."/>
            <person name="Oesterhelt D."/>
        </authorList>
    </citation>
    <scope>NUCLEOTIDE SEQUENCE [LARGE SCALE GENOMIC DNA]</scope>
    <source>
        <strain>DSM 16790 / HBSQ001</strain>
    </source>
</reference>
<name>ENGB_HALWD</name>